<evidence type="ECO:0000255" key="1">
    <source>
        <dbReference type="HAMAP-Rule" id="MF_00686"/>
    </source>
</evidence>
<accession>Q1IJI6</accession>
<name>FETP_KORVE</name>
<keyword id="KW-0408">Iron</keyword>
<keyword id="KW-1185">Reference proteome</keyword>
<reference key="1">
    <citation type="journal article" date="2009" name="Appl. Environ. Microbiol.">
        <title>Three genomes from the phylum Acidobacteria provide insight into the lifestyles of these microorganisms in soils.</title>
        <authorList>
            <person name="Ward N.L."/>
            <person name="Challacombe J.F."/>
            <person name="Janssen P.H."/>
            <person name="Henrissat B."/>
            <person name="Coutinho P.M."/>
            <person name="Wu M."/>
            <person name="Xie G."/>
            <person name="Haft D.H."/>
            <person name="Sait M."/>
            <person name="Badger J."/>
            <person name="Barabote R.D."/>
            <person name="Bradley B."/>
            <person name="Brettin T.S."/>
            <person name="Brinkac L.M."/>
            <person name="Bruce D."/>
            <person name="Creasy T."/>
            <person name="Daugherty S.C."/>
            <person name="Davidsen T.M."/>
            <person name="DeBoy R.T."/>
            <person name="Detter J.C."/>
            <person name="Dodson R.J."/>
            <person name="Durkin A.S."/>
            <person name="Ganapathy A."/>
            <person name="Gwinn-Giglio M."/>
            <person name="Han C.S."/>
            <person name="Khouri H."/>
            <person name="Kiss H."/>
            <person name="Kothari S.P."/>
            <person name="Madupu R."/>
            <person name="Nelson K.E."/>
            <person name="Nelson W.C."/>
            <person name="Paulsen I."/>
            <person name="Penn K."/>
            <person name="Ren Q."/>
            <person name="Rosovitz M.J."/>
            <person name="Selengut J.D."/>
            <person name="Shrivastava S."/>
            <person name="Sullivan S.A."/>
            <person name="Tapia R."/>
            <person name="Thompson L.S."/>
            <person name="Watkins K.L."/>
            <person name="Yang Q."/>
            <person name="Yu C."/>
            <person name="Zafar N."/>
            <person name="Zhou L."/>
            <person name="Kuske C.R."/>
        </authorList>
    </citation>
    <scope>NUCLEOTIDE SEQUENCE [LARGE SCALE GENOMIC DNA]</scope>
    <source>
        <strain>Ellin345</strain>
    </source>
</reference>
<gene>
    <name type="ordered locus">Acid345_3964</name>
</gene>
<feature type="chain" id="PRO_1000045009" description="Probable Fe(2+)-trafficking protein">
    <location>
        <begin position="1"/>
        <end position="90"/>
    </location>
</feature>
<organism>
    <name type="scientific">Koribacter versatilis (strain Ellin345)</name>
    <dbReference type="NCBI Taxonomy" id="204669"/>
    <lineage>
        <taxon>Bacteria</taxon>
        <taxon>Pseudomonadati</taxon>
        <taxon>Acidobacteriota</taxon>
        <taxon>Terriglobia</taxon>
        <taxon>Terriglobales</taxon>
        <taxon>Candidatus Korobacteraceae</taxon>
        <taxon>Candidatus Korobacter</taxon>
    </lineage>
</organism>
<sequence length="90" mass="10580">MAHMVKCVKLGREAEGLEEPPFDSELGQKIYNNVSAEAWRGWTEHQKMLLNEYRLQPWKKEHQEFLVQQMEAYFFGEGSEAPKEFVPPSH</sequence>
<protein>
    <recommendedName>
        <fullName evidence="1">Probable Fe(2+)-trafficking protein</fullName>
    </recommendedName>
</protein>
<comment type="function">
    <text evidence="1">Could be a mediator in iron transactions between iron acquisition and iron-requiring processes, such as synthesis and/or repair of Fe-S clusters in biosynthetic enzymes.</text>
</comment>
<comment type="similarity">
    <text evidence="1">Belongs to the Fe(2+)-trafficking protein family.</text>
</comment>
<proteinExistence type="inferred from homology"/>
<dbReference type="EMBL" id="CP000360">
    <property type="protein sequence ID" value="ABF42964.1"/>
    <property type="molecule type" value="Genomic_DNA"/>
</dbReference>
<dbReference type="RefSeq" id="WP_011524763.1">
    <property type="nucleotide sequence ID" value="NC_008009.1"/>
</dbReference>
<dbReference type="SMR" id="Q1IJI6"/>
<dbReference type="STRING" id="204669.Acid345_3964"/>
<dbReference type="EnsemblBacteria" id="ABF42964">
    <property type="protein sequence ID" value="ABF42964"/>
    <property type="gene ID" value="Acid345_3964"/>
</dbReference>
<dbReference type="KEGG" id="aba:Acid345_3964"/>
<dbReference type="eggNOG" id="COG2924">
    <property type="taxonomic scope" value="Bacteria"/>
</dbReference>
<dbReference type="HOGENOM" id="CLU_170994_0_0_0"/>
<dbReference type="OrthoDB" id="9804318at2"/>
<dbReference type="Proteomes" id="UP000002432">
    <property type="component" value="Chromosome"/>
</dbReference>
<dbReference type="GO" id="GO:0005829">
    <property type="term" value="C:cytosol"/>
    <property type="evidence" value="ECO:0007669"/>
    <property type="project" value="TreeGrafter"/>
</dbReference>
<dbReference type="GO" id="GO:0005506">
    <property type="term" value="F:iron ion binding"/>
    <property type="evidence" value="ECO:0007669"/>
    <property type="project" value="UniProtKB-UniRule"/>
</dbReference>
<dbReference type="GO" id="GO:0034599">
    <property type="term" value="P:cellular response to oxidative stress"/>
    <property type="evidence" value="ECO:0007669"/>
    <property type="project" value="TreeGrafter"/>
</dbReference>
<dbReference type="Gene3D" id="1.10.3880.10">
    <property type="entry name" value="Fe(II) trafficking protein YggX"/>
    <property type="match status" value="1"/>
</dbReference>
<dbReference type="HAMAP" id="MF_00686">
    <property type="entry name" value="Fe_traffic_YggX"/>
    <property type="match status" value="1"/>
</dbReference>
<dbReference type="InterPro" id="IPR007457">
    <property type="entry name" value="Fe_traffick_prot_YggX"/>
</dbReference>
<dbReference type="InterPro" id="IPR036766">
    <property type="entry name" value="Fe_traffick_prot_YggX_sf"/>
</dbReference>
<dbReference type="NCBIfam" id="NF003817">
    <property type="entry name" value="PRK05408.1"/>
    <property type="match status" value="1"/>
</dbReference>
<dbReference type="PANTHER" id="PTHR36965">
    <property type="entry name" value="FE(2+)-TRAFFICKING PROTEIN-RELATED"/>
    <property type="match status" value="1"/>
</dbReference>
<dbReference type="PANTHER" id="PTHR36965:SF1">
    <property type="entry name" value="FE(2+)-TRAFFICKING PROTEIN-RELATED"/>
    <property type="match status" value="1"/>
</dbReference>
<dbReference type="Pfam" id="PF04362">
    <property type="entry name" value="Iron_traffic"/>
    <property type="match status" value="1"/>
</dbReference>
<dbReference type="PIRSF" id="PIRSF029827">
    <property type="entry name" value="Fe_traffic_YggX"/>
    <property type="match status" value="1"/>
</dbReference>
<dbReference type="SUPFAM" id="SSF111148">
    <property type="entry name" value="YggX-like"/>
    <property type="match status" value="1"/>
</dbReference>